<proteinExistence type="evidence at protein level"/>
<evidence type="ECO:0000255" key="1">
    <source>
        <dbReference type="PROSITE-ProRule" id="PRU00717"/>
    </source>
</evidence>
<evidence type="ECO:0000269" key="2">
    <source>
    </source>
</evidence>
<evidence type="ECO:0000269" key="3">
    <source>
    </source>
</evidence>
<evidence type="ECO:0000269" key="4">
    <source>
    </source>
</evidence>
<evidence type="ECO:0000269" key="5">
    <source>
    </source>
</evidence>
<evidence type="ECO:0000269" key="6">
    <source>
    </source>
</evidence>
<evidence type="ECO:0007829" key="7">
    <source>
        <dbReference type="PDB" id="3ETV"/>
    </source>
</evidence>
<evidence type="ECO:0007829" key="8">
    <source>
        <dbReference type="PDB" id="3FHN"/>
    </source>
</evidence>
<keyword id="KW-0002">3D-structure</keyword>
<keyword id="KW-0256">Endoplasmic reticulum</keyword>
<keyword id="KW-0931">ER-Golgi transport</keyword>
<keyword id="KW-0472">Membrane</keyword>
<keyword id="KW-0653">Protein transport</keyword>
<keyword id="KW-1185">Reference proteome</keyword>
<keyword id="KW-0813">Transport</keyword>
<dbReference type="EMBL" id="X72699">
    <property type="protein sequence ID" value="CAA51249.1"/>
    <property type="molecule type" value="Genomic_DNA"/>
</dbReference>
<dbReference type="EMBL" id="X99960">
    <property type="protein sequence ID" value="CAA68217.1"/>
    <property type="molecule type" value="Genomic_DNA"/>
</dbReference>
<dbReference type="EMBL" id="Z72667">
    <property type="protein sequence ID" value="CAA96857.1"/>
    <property type="molecule type" value="Genomic_DNA"/>
</dbReference>
<dbReference type="EMBL" id="BK006941">
    <property type="protein sequence ID" value="DAA07965.1"/>
    <property type="molecule type" value="Genomic_DNA"/>
</dbReference>
<dbReference type="PIR" id="S35313">
    <property type="entry name" value="S35313"/>
</dbReference>
<dbReference type="RefSeq" id="NP_116577.1">
    <property type="nucleotide sequence ID" value="NM_001181010.2"/>
</dbReference>
<dbReference type="PDB" id="3ETV">
    <property type="method" value="X-ray"/>
    <property type="resolution" value="1.94 A"/>
    <property type="chains" value="A=1-40"/>
</dbReference>
<dbReference type="PDB" id="3FHN">
    <property type="method" value="X-ray"/>
    <property type="resolution" value="3.00 A"/>
    <property type="chains" value="A/B/C/D=2-701"/>
</dbReference>
<dbReference type="PDB" id="8EKI">
    <property type="method" value="EM"/>
    <property type="resolution" value="4.50 A"/>
    <property type="chains" value="C=1-701"/>
</dbReference>
<dbReference type="PDBsum" id="3ETV"/>
<dbReference type="PDBsum" id="3FHN"/>
<dbReference type="PDBsum" id="8EKI"/>
<dbReference type="EMDB" id="EMD-28204"/>
<dbReference type="SMR" id="P33891"/>
<dbReference type="BioGRID" id="33107">
    <property type="interactions" value="211"/>
</dbReference>
<dbReference type="ComplexPortal" id="CPX-1786">
    <property type="entry name" value="Dsl1 tethering complex"/>
</dbReference>
<dbReference type="DIP" id="DIP-2004N"/>
<dbReference type="FunCoup" id="P33891">
    <property type="interactions" value="204"/>
</dbReference>
<dbReference type="IntAct" id="P33891">
    <property type="interactions" value="11"/>
</dbReference>
<dbReference type="MINT" id="P33891"/>
<dbReference type="STRING" id="4932.YGL145W"/>
<dbReference type="iPTMnet" id="P33891"/>
<dbReference type="PaxDb" id="4932-YGL145W"/>
<dbReference type="PeptideAtlas" id="P33891"/>
<dbReference type="EnsemblFungi" id="YGL145W_mRNA">
    <property type="protein sequence ID" value="YGL145W"/>
    <property type="gene ID" value="YGL145W"/>
</dbReference>
<dbReference type="GeneID" id="852732"/>
<dbReference type="KEGG" id="sce:YGL145W"/>
<dbReference type="AGR" id="SGD:S000003113"/>
<dbReference type="SGD" id="S000003113">
    <property type="gene designation" value="TIP20"/>
</dbReference>
<dbReference type="VEuPathDB" id="FungiDB:YGL145W"/>
<dbReference type="eggNOG" id="KOG2218">
    <property type="taxonomic scope" value="Eukaryota"/>
</dbReference>
<dbReference type="HOGENOM" id="CLU_410507_0_0_1"/>
<dbReference type="InParanoid" id="P33891"/>
<dbReference type="OMA" id="TCSQIFM"/>
<dbReference type="OrthoDB" id="2189254at2759"/>
<dbReference type="BioCyc" id="YEAST:G3O-30639-MONOMER"/>
<dbReference type="Reactome" id="R-SCE-6811434">
    <property type="pathway name" value="COPI-dependent Golgi-to-ER retrograde traffic"/>
</dbReference>
<dbReference type="BioGRID-ORCS" id="852732">
    <property type="hits" value="0 hits in 10 CRISPR screens"/>
</dbReference>
<dbReference type="EvolutionaryTrace" id="P33891"/>
<dbReference type="PRO" id="PR:P33891"/>
<dbReference type="Proteomes" id="UP000002311">
    <property type="component" value="Chromosome VII"/>
</dbReference>
<dbReference type="RNAct" id="P33891">
    <property type="molecule type" value="protein"/>
</dbReference>
<dbReference type="GO" id="GO:0005829">
    <property type="term" value="C:cytosol"/>
    <property type="evidence" value="ECO:0007005"/>
    <property type="project" value="SGD"/>
</dbReference>
<dbReference type="GO" id="GO:0070939">
    <property type="term" value="C:Dsl1/NZR complex"/>
    <property type="evidence" value="ECO:0000314"/>
    <property type="project" value="SGD"/>
</dbReference>
<dbReference type="GO" id="GO:0005783">
    <property type="term" value="C:endoplasmic reticulum"/>
    <property type="evidence" value="ECO:0000314"/>
    <property type="project" value="SGD"/>
</dbReference>
<dbReference type="GO" id="GO:0005789">
    <property type="term" value="C:endoplasmic reticulum membrane"/>
    <property type="evidence" value="ECO:0007669"/>
    <property type="project" value="UniProtKB-SubCell"/>
</dbReference>
<dbReference type="GO" id="GO:0006914">
    <property type="term" value="P:autophagy"/>
    <property type="evidence" value="ECO:0000315"/>
    <property type="project" value="SGD"/>
</dbReference>
<dbReference type="GO" id="GO:0006888">
    <property type="term" value="P:endoplasmic reticulum to Golgi vesicle-mediated transport"/>
    <property type="evidence" value="ECO:0007669"/>
    <property type="project" value="InterPro"/>
</dbReference>
<dbReference type="GO" id="GO:0015031">
    <property type="term" value="P:protein transport"/>
    <property type="evidence" value="ECO:0007669"/>
    <property type="project" value="UniProtKB-KW"/>
</dbReference>
<dbReference type="GO" id="GO:0060628">
    <property type="term" value="P:regulation of ER to Golgi vesicle-mediated transport"/>
    <property type="evidence" value="ECO:0000318"/>
    <property type="project" value="GO_Central"/>
</dbReference>
<dbReference type="GO" id="GO:0006890">
    <property type="term" value="P:retrograde vesicle-mediated transport, Golgi to endoplasmic reticulum"/>
    <property type="evidence" value="ECO:0000314"/>
    <property type="project" value="ComplexPortal"/>
</dbReference>
<dbReference type="FunFam" id="1.10.357.100:FF:000001">
    <property type="entry name" value="Protein transport protein TIP20"/>
    <property type="match status" value="1"/>
</dbReference>
<dbReference type="FunFam" id="1.20.58.1420:FF:000002">
    <property type="entry name" value="Protein transport protein TIP20"/>
    <property type="match status" value="1"/>
</dbReference>
<dbReference type="Gene3D" id="6.10.280.210">
    <property type="entry name" value="Dsl1p vesicle tethering complex, Tip20p subunit, domain A"/>
    <property type="match status" value="1"/>
</dbReference>
<dbReference type="Gene3D" id="1.20.58.1420">
    <property type="entry name" value="Dsl1p vesicle tethering complex, Tip20p subunit, domain B"/>
    <property type="match status" value="1"/>
</dbReference>
<dbReference type="Gene3D" id="1.10.357.100">
    <property type="entry name" value="Dsl1p vesicle tethering complex, Tip20p subunit, domain C"/>
    <property type="match status" value="1"/>
</dbReference>
<dbReference type="Gene3D" id="1.20.58.670">
    <property type="entry name" value="Dsl1p vesicle tethering complex, Tip20p subunit, domain D"/>
    <property type="match status" value="1"/>
</dbReference>
<dbReference type="Gene3D" id="1.10.10.2270">
    <property type="entry name" value="Dsl1p vesicle tethering complex, Tip20p subunit, domain E"/>
    <property type="match status" value="1"/>
</dbReference>
<dbReference type="InterPro" id="IPR042044">
    <property type="entry name" value="EXOC6PINT-1/Sec15/Tip20_C_dom2"/>
</dbReference>
<dbReference type="InterPro" id="IPR007528">
    <property type="entry name" value="RINT1_Tip20"/>
</dbReference>
<dbReference type="InterPro" id="IPR042041">
    <property type="entry name" value="Tip20p_domA"/>
</dbReference>
<dbReference type="InterPro" id="IPR042042">
    <property type="entry name" value="Tip20p_domB"/>
</dbReference>
<dbReference type="InterPro" id="IPR042043">
    <property type="entry name" value="Tip20p_domC"/>
</dbReference>
<dbReference type="InterPro" id="IPR042040">
    <property type="entry name" value="Tip20p_domE"/>
</dbReference>
<dbReference type="PANTHER" id="PTHR13520:SF0">
    <property type="entry name" value="RAD50-INTERACTING PROTEIN 1"/>
    <property type="match status" value="1"/>
</dbReference>
<dbReference type="PANTHER" id="PTHR13520">
    <property type="entry name" value="RAD50-INTERACTING PROTEIN 1 RINT-1"/>
    <property type="match status" value="1"/>
</dbReference>
<dbReference type="Pfam" id="PF04437">
    <property type="entry name" value="RINT1_TIP1"/>
    <property type="match status" value="1"/>
</dbReference>
<dbReference type="PROSITE" id="PS51386">
    <property type="entry name" value="RINT1_TIP20"/>
    <property type="match status" value="1"/>
</dbReference>
<gene>
    <name type="primary">TIP20</name>
    <name type="synonym">TIP1</name>
    <name type="ordered locus">YGL145W</name>
</gene>
<sequence length="701" mass="81167">MNGIDDLLNINDRIKQVQNERNELASKLQNLKQSLASNDTEVALSEVIAQDIIEVGASVEGLEQLRAKYGDLQILNKLEKVAVQQTQMQAGVDKLDSFERQLDELAEQPPDQFTLDDVKALHSKLTSVFATVPQINNIDSQYAAYNKLKSKVTGKYNDVIIQRLATNWSNTFDQKLLEAQWDTQKFASTSVGLVKCLRENSTKLYQLSLLYLPLEEETQNGDSERPLSRSNNNQEPVLWNFKSLANNFNVRFTYHFHATSSSSKIETYFQFLNDYLAENLYKCINIFHDDCNGLTKPVIHEQFINYVLQPIRDKVRSTLFQNDLKTLIVLISQILATDKNLLNSFHYHGLGLVSLISDEVWEKWINYEVEMANRQFINITKNPEDFPKSSQNFVKLINKIYDYLEPFYDLDFDLLVRYKLMTCSLIFMNLTSSYLDYILTVDSLNETRTKEQELYQTMAKLQHVNFVYRKIKSLSSNFIFIQLTDIVNSTESKKYNSLFQNVENDYEKAMSTDMQNSIVHRIQKLLKETLRNYFKISTWSTLEMSVDENIGPSSVPSAELVNSINVLRRLINKLDSMDIPLAISLKVKNELLNVIVNYFTESILKLNKFNQNGLNQFLHDFKSLSSILSLPSHATNYKCMSLHELVKILKLKYDPNNQQFLNPEYIKTGNFTSLKEAYSIKYLKDTKIQDALYRIIYGNIL</sequence>
<organism>
    <name type="scientific">Saccharomyces cerevisiae (strain ATCC 204508 / S288c)</name>
    <name type="common">Baker's yeast</name>
    <dbReference type="NCBI Taxonomy" id="559292"/>
    <lineage>
        <taxon>Eukaryota</taxon>
        <taxon>Fungi</taxon>
        <taxon>Dikarya</taxon>
        <taxon>Ascomycota</taxon>
        <taxon>Saccharomycotina</taxon>
        <taxon>Saccharomycetes</taxon>
        <taxon>Saccharomycetales</taxon>
        <taxon>Saccharomycetaceae</taxon>
        <taxon>Saccharomyces</taxon>
    </lineage>
</organism>
<comment type="function">
    <text evidence="4 6">Required for protein transport between the Golgi and the endoplasmic reticulum. May contribute to tethering of coatomer-coated retrograde transport vesicles to the ER membrane through interaction with and stabilization of the SNARE complex.</text>
</comment>
<comment type="subunit">
    <text evidence="3 4 5 6">Component of a peripheral membrane protein complex consisting of DSL1, SEC39/DSL3 and TIP20. Bound to a SNARE complex consisting of UFE1, USE1, SEC20 and SEC22 or YKT6 through direct interaction of TIP20 with SEC20. Interacts with DSL1, SEC39/DSL3 and the cytoplasmic domain of SEC20.</text>
</comment>
<comment type="interaction">
    <interactant intactId="EBI-19396">
        <id>P33891</id>
    </interactant>
    <interactant intactId="EBI-29249">
        <id>P53847</id>
        <label>DSL1</label>
    </interactant>
    <organismsDiffer>false</organismsDiffer>
    <experiments>15</experiments>
</comment>
<comment type="interaction">
    <interactant intactId="EBI-19396">
        <id>P33891</id>
    </interactant>
    <interactant intactId="EBI-16572">
        <id>P28791</id>
        <label>SEC20</label>
    </interactant>
    <organismsDiffer>false</organismsDiffer>
    <experiments>9</experiments>
</comment>
<comment type="interaction">
    <interactant intactId="EBI-19396">
        <id>P33891</id>
    </interactant>
    <interactant intactId="EBI-31898">
        <id>Q12745</id>
        <label>SEC39</label>
    </interactant>
    <organismsDiffer>false</organismsDiffer>
    <experiments>5</experiments>
</comment>
<comment type="interaction">
    <interactant intactId="EBI-19396">
        <id>P33891</id>
    </interactant>
    <interactant intactId="EBI-20016">
        <id>P41834</id>
        <label>UFE1</label>
    </interactant>
    <organismsDiffer>false</organismsDiffer>
    <experiments>3</experiments>
</comment>
<comment type="subcellular location">
    <subcellularLocation>
        <location evidence="6">Endoplasmic reticulum membrane</location>
        <topology evidence="6">Peripheral membrane protein</topology>
    </subcellularLocation>
</comment>
<comment type="miscellaneous">
    <text evidence="2">Present with 6020 molecules/cell in log phase SD medium.</text>
</comment>
<protein>
    <recommendedName>
        <fullName>Protein transport protein TIP20</fullName>
    </recommendedName>
</protein>
<name>TIP20_YEAST</name>
<feature type="chain" id="PRO_0000072543" description="Protein transport protein TIP20">
    <location>
        <begin position="1"/>
        <end position="701"/>
    </location>
</feature>
<feature type="domain" description="RINT1/TIP20" evidence="1">
    <location>
        <begin position="147"/>
        <end position="701"/>
    </location>
</feature>
<feature type="helix" evidence="7">
    <location>
        <begin position="10"/>
        <end position="31"/>
    </location>
</feature>
<feature type="helix" evidence="8">
    <location>
        <begin position="46"/>
        <end position="54"/>
    </location>
</feature>
<feature type="helix" evidence="8">
    <location>
        <begin position="59"/>
        <end position="67"/>
    </location>
</feature>
<feature type="helix" evidence="8">
    <location>
        <begin position="73"/>
        <end position="105"/>
    </location>
</feature>
<feature type="helix" evidence="8">
    <location>
        <begin position="110"/>
        <end position="112"/>
    </location>
</feature>
<feature type="helix" evidence="8">
    <location>
        <begin position="115"/>
        <end position="129"/>
    </location>
</feature>
<feature type="helix" evidence="8">
    <location>
        <begin position="142"/>
        <end position="159"/>
    </location>
</feature>
<feature type="helix" evidence="8">
    <location>
        <begin position="161"/>
        <end position="178"/>
    </location>
</feature>
<feature type="turn" evidence="8">
    <location>
        <begin position="179"/>
        <end position="182"/>
    </location>
</feature>
<feature type="helix" evidence="8">
    <location>
        <begin position="188"/>
        <end position="190"/>
    </location>
</feature>
<feature type="helix" evidence="8">
    <location>
        <begin position="192"/>
        <end position="208"/>
    </location>
</feature>
<feature type="helix" evidence="8">
    <location>
        <begin position="239"/>
        <end position="255"/>
    </location>
</feature>
<feature type="helix" evidence="8">
    <location>
        <begin position="262"/>
        <end position="287"/>
    </location>
</feature>
<feature type="helix" evidence="8">
    <location>
        <begin position="290"/>
        <end position="292"/>
    </location>
</feature>
<feature type="helix" evidence="8">
    <location>
        <begin position="296"/>
        <end position="307"/>
    </location>
</feature>
<feature type="helix" evidence="8">
    <location>
        <begin position="309"/>
        <end position="320"/>
    </location>
</feature>
<feature type="helix" evidence="8">
    <location>
        <begin position="324"/>
        <end position="344"/>
    </location>
</feature>
<feature type="helix" evidence="8">
    <location>
        <begin position="352"/>
        <end position="355"/>
    </location>
</feature>
<feature type="helix" evidence="8">
    <location>
        <begin position="358"/>
        <end position="378"/>
    </location>
</feature>
<feature type="helix" evidence="8">
    <location>
        <begin position="383"/>
        <end position="388"/>
    </location>
</feature>
<feature type="helix" evidence="8">
    <location>
        <begin position="389"/>
        <end position="404"/>
    </location>
</feature>
<feature type="helix" evidence="8">
    <location>
        <begin position="406"/>
        <end position="409"/>
    </location>
</feature>
<feature type="helix" evidence="8">
    <location>
        <begin position="413"/>
        <end position="416"/>
    </location>
</feature>
<feature type="helix" evidence="8">
    <location>
        <begin position="417"/>
        <end position="425"/>
    </location>
</feature>
<feature type="helix" evidence="8">
    <location>
        <begin position="427"/>
        <end position="439"/>
    </location>
</feature>
<feature type="strand" evidence="8">
    <location>
        <begin position="446"/>
        <end position="449"/>
    </location>
</feature>
<feature type="helix" evidence="8">
    <location>
        <begin position="450"/>
        <end position="474"/>
    </location>
</feature>
<feature type="helix" evidence="8">
    <location>
        <begin position="478"/>
        <end position="490"/>
    </location>
</feature>
<feature type="helix" evidence="8">
    <location>
        <begin position="500"/>
        <end position="511"/>
    </location>
</feature>
<feature type="helix" evidence="8">
    <location>
        <begin position="513"/>
        <end position="529"/>
    </location>
</feature>
<feature type="helix" evidence="8">
    <location>
        <begin position="531"/>
        <end position="535"/>
    </location>
</feature>
<feature type="helix" evidence="8">
    <location>
        <begin position="538"/>
        <end position="540"/>
    </location>
</feature>
<feature type="helix" evidence="8">
    <location>
        <begin position="558"/>
        <end position="560"/>
    </location>
</feature>
<feature type="helix" evidence="8">
    <location>
        <begin position="561"/>
        <end position="575"/>
    </location>
</feature>
<feature type="helix" evidence="8">
    <location>
        <begin position="581"/>
        <end position="601"/>
    </location>
</feature>
<feature type="turn" evidence="8">
    <location>
        <begin position="602"/>
        <end position="606"/>
    </location>
</feature>
<feature type="helix" evidence="8">
    <location>
        <begin position="611"/>
        <end position="625"/>
    </location>
</feature>
<feature type="helix" evidence="8">
    <location>
        <begin position="637"/>
        <end position="649"/>
    </location>
</feature>
<feature type="helix" evidence="8">
    <location>
        <begin position="650"/>
        <end position="653"/>
    </location>
</feature>
<feature type="helix" evidence="8">
    <location>
        <begin position="655"/>
        <end position="657"/>
    </location>
</feature>
<feature type="turn" evidence="8">
    <location>
        <begin position="658"/>
        <end position="661"/>
    </location>
</feature>
<feature type="helix" evidence="8">
    <location>
        <begin position="663"/>
        <end position="668"/>
    </location>
</feature>
<feature type="helix" evidence="8">
    <location>
        <begin position="673"/>
        <end position="678"/>
    </location>
</feature>
<feature type="strand" evidence="8">
    <location>
        <begin position="681"/>
        <end position="683"/>
    </location>
</feature>
<feature type="helix" evidence="8">
    <location>
        <begin position="685"/>
        <end position="696"/>
    </location>
</feature>
<reference key="1">
    <citation type="journal article" date="1993" name="EMBO J.">
        <title>The TIP1 gene of Saccharomyces cerevisiae encodes an 80 kDa cytoplasmic protein that interacts with the cytoplasmic domain of Sec20p.</title>
        <authorList>
            <person name="Sweet D.J."/>
            <person name="Pelham H.R.B."/>
        </authorList>
    </citation>
    <scope>NUCLEOTIDE SEQUENCE [GENOMIC DNA]</scope>
    <scope>FUNCTION</scope>
    <scope>SUBCELLULAR LOCATION</scope>
    <scope>INTERACTION WITH SEC20</scope>
</reference>
<reference key="2">
    <citation type="journal article" date="1997" name="Yeast">
        <title>The sequence of a nearly unclonable 22.8 kb segment on the left arm chromosome VII from Saccharomyces cerevisiae reveals ARO2, RPL9A, TIP1, MRF1 genes and six new open reading frames.</title>
        <authorList>
            <person name="Voet M."/>
            <person name="Defoor E."/>
            <person name="Verhasselt P."/>
            <person name="Riles L."/>
            <person name="Robben J."/>
            <person name="Volckaert G."/>
        </authorList>
    </citation>
    <scope>NUCLEOTIDE SEQUENCE [GENOMIC DNA]</scope>
    <source>
        <strain>ATCC 96604 / S288c / FY1679</strain>
    </source>
</reference>
<reference key="3">
    <citation type="journal article" date="1997" name="Nature">
        <title>The nucleotide sequence of Saccharomyces cerevisiae chromosome VII.</title>
        <authorList>
            <person name="Tettelin H."/>
            <person name="Agostoni-Carbone M.L."/>
            <person name="Albermann K."/>
            <person name="Albers M."/>
            <person name="Arroyo J."/>
            <person name="Backes U."/>
            <person name="Barreiros T."/>
            <person name="Bertani I."/>
            <person name="Bjourson A.J."/>
            <person name="Brueckner M."/>
            <person name="Bruschi C.V."/>
            <person name="Carignani G."/>
            <person name="Castagnoli L."/>
            <person name="Cerdan E."/>
            <person name="Clemente M.L."/>
            <person name="Coblenz A."/>
            <person name="Coglievina M."/>
            <person name="Coissac E."/>
            <person name="Defoor E."/>
            <person name="Del Bino S."/>
            <person name="Delius H."/>
            <person name="Delneri D."/>
            <person name="de Wergifosse P."/>
            <person name="Dujon B."/>
            <person name="Durand P."/>
            <person name="Entian K.-D."/>
            <person name="Eraso P."/>
            <person name="Escribano V."/>
            <person name="Fabiani L."/>
            <person name="Fartmann B."/>
            <person name="Feroli F."/>
            <person name="Feuermann M."/>
            <person name="Frontali L."/>
            <person name="Garcia-Gonzalez M."/>
            <person name="Garcia-Saez M.I."/>
            <person name="Goffeau A."/>
            <person name="Guerreiro P."/>
            <person name="Hani J."/>
            <person name="Hansen M."/>
            <person name="Hebling U."/>
            <person name="Hernandez K."/>
            <person name="Heumann K."/>
            <person name="Hilger F."/>
            <person name="Hofmann B."/>
            <person name="Indge K.J."/>
            <person name="James C.M."/>
            <person name="Klima R."/>
            <person name="Koetter P."/>
            <person name="Kramer B."/>
            <person name="Kramer W."/>
            <person name="Lauquin G."/>
            <person name="Leuther H."/>
            <person name="Louis E.J."/>
            <person name="Maillier E."/>
            <person name="Marconi A."/>
            <person name="Martegani E."/>
            <person name="Mazon M.J."/>
            <person name="Mazzoni C."/>
            <person name="McReynolds A.D.K."/>
            <person name="Melchioretto P."/>
            <person name="Mewes H.-W."/>
            <person name="Minenkova O."/>
            <person name="Mueller-Auer S."/>
            <person name="Nawrocki A."/>
            <person name="Netter P."/>
            <person name="Neu R."/>
            <person name="Nombela C."/>
            <person name="Oliver S.G."/>
            <person name="Panzeri L."/>
            <person name="Paoluzi S."/>
            <person name="Plevani P."/>
            <person name="Portetelle D."/>
            <person name="Portillo F."/>
            <person name="Potier S."/>
            <person name="Purnelle B."/>
            <person name="Rieger M."/>
            <person name="Riles L."/>
            <person name="Rinaldi T."/>
            <person name="Robben J."/>
            <person name="Rodrigues-Pousada C."/>
            <person name="Rodriguez-Belmonte E."/>
            <person name="Rodriguez-Torres A.M."/>
            <person name="Rose M."/>
            <person name="Ruzzi M."/>
            <person name="Saliola M."/>
            <person name="Sanchez-Perez M."/>
            <person name="Schaefer B."/>
            <person name="Schaefer M."/>
            <person name="Scharfe M."/>
            <person name="Schmidheini T."/>
            <person name="Schreer A."/>
            <person name="Skala J."/>
            <person name="Souciet J.-L."/>
            <person name="Steensma H.Y."/>
            <person name="Talla E."/>
            <person name="Thierry A."/>
            <person name="Vandenbol M."/>
            <person name="van der Aart Q.J.M."/>
            <person name="Van Dyck L."/>
            <person name="Vanoni M."/>
            <person name="Verhasselt P."/>
            <person name="Voet M."/>
            <person name="Volckaert G."/>
            <person name="Wambutt R."/>
            <person name="Watson M.D."/>
            <person name="Weber N."/>
            <person name="Wedler E."/>
            <person name="Wedler H."/>
            <person name="Wipfli P."/>
            <person name="Wolf K."/>
            <person name="Wright L.F."/>
            <person name="Zaccaria P."/>
            <person name="Zimmermann M."/>
            <person name="Zollner A."/>
            <person name="Kleine K."/>
        </authorList>
    </citation>
    <scope>NUCLEOTIDE SEQUENCE [LARGE SCALE GENOMIC DNA]</scope>
    <source>
        <strain>ATCC 204508 / S288c</strain>
    </source>
</reference>
<reference key="4">
    <citation type="journal article" date="2014" name="G3 (Bethesda)">
        <title>The reference genome sequence of Saccharomyces cerevisiae: Then and now.</title>
        <authorList>
            <person name="Engel S.R."/>
            <person name="Dietrich F.S."/>
            <person name="Fisk D.G."/>
            <person name="Binkley G."/>
            <person name="Balakrishnan R."/>
            <person name="Costanzo M.C."/>
            <person name="Dwight S.S."/>
            <person name="Hitz B.C."/>
            <person name="Karra K."/>
            <person name="Nash R.S."/>
            <person name="Weng S."/>
            <person name="Wong E.D."/>
            <person name="Lloyd P."/>
            <person name="Skrzypek M.S."/>
            <person name="Miyasato S.R."/>
            <person name="Simison M."/>
            <person name="Cherry J.M."/>
        </authorList>
    </citation>
    <scope>GENOME REANNOTATION</scope>
    <source>
        <strain>ATCC 204508 / S288c</strain>
    </source>
</reference>
<reference key="5">
    <citation type="journal article" date="2003" name="Nature">
        <title>Global analysis of protein expression in yeast.</title>
        <authorList>
            <person name="Ghaemmaghami S."/>
            <person name="Huh W.-K."/>
            <person name="Bower K."/>
            <person name="Howson R.W."/>
            <person name="Belle A."/>
            <person name="Dephoure N."/>
            <person name="O'Shea E.K."/>
            <person name="Weissman J.S."/>
        </authorList>
    </citation>
    <scope>LEVEL OF PROTEIN EXPRESSION [LARGE SCALE ANALYSIS]</scope>
</reference>
<reference key="6">
    <citation type="journal article" date="2005" name="J. Gen. Appl. Microbiol.">
        <title>Isolation of Saccharomyces cerevisiae RNase T1 hypersensitive (rns) mutants and genetic analysis of the RNS1/DSL1 gene.</title>
        <authorList>
            <person name="Ishikawa T."/>
            <person name="Unno K."/>
            <person name="Nonaka G."/>
            <person name="Nakajima H."/>
            <person name="Kitamoto K."/>
        </authorList>
    </citation>
    <scope>INTERACTION WITH SEC39</scope>
</reference>
<reference key="7">
    <citation type="journal article" date="2005" name="Mol. Biol. Cell">
        <title>Dsl1p, Tip20p, and the novel Dsl3(Sec39) protein are required for the stability of the Q/t-SNARE complex at the endoplasmic reticulum in yeast.</title>
        <authorList>
            <person name="Kraynack B.A."/>
            <person name="Chan A."/>
            <person name="Rosenthal E."/>
            <person name="Essid M."/>
            <person name="Umansky B."/>
            <person name="Waters M.G."/>
            <person name="Schmitt H.D."/>
        </authorList>
    </citation>
    <scope>FUNCTION</scope>
    <scope>IDENTIFICATION IN A COMPLEX WITH DSL1; SEC39; SEC20; USE1 AND UFE1</scope>
</reference>
<reference key="8">
    <citation type="journal article" date="2006" name="Nature">
        <title>Proteome survey reveals modularity of the yeast cell machinery.</title>
        <authorList>
            <person name="Gavin A.-C."/>
            <person name="Aloy P."/>
            <person name="Grandi P."/>
            <person name="Krause R."/>
            <person name="Boesche M."/>
            <person name="Marzioch M."/>
            <person name="Rau C."/>
            <person name="Jensen L.J."/>
            <person name="Bastuck S."/>
            <person name="Duempelfeld B."/>
            <person name="Edelmann A."/>
            <person name="Heurtier M.-A."/>
            <person name="Hoffman V."/>
            <person name="Hoefert C."/>
            <person name="Klein K."/>
            <person name="Hudak M."/>
            <person name="Michon A.-M."/>
            <person name="Schelder M."/>
            <person name="Schirle M."/>
            <person name="Remor M."/>
            <person name="Rudi T."/>
            <person name="Hooper S."/>
            <person name="Bauer A."/>
            <person name="Bouwmeester T."/>
            <person name="Casari G."/>
            <person name="Drewes G."/>
            <person name="Neubauer G."/>
            <person name="Rick J.M."/>
            <person name="Kuster B."/>
            <person name="Bork P."/>
            <person name="Russell R.B."/>
            <person name="Superti-Furga G."/>
        </authorList>
    </citation>
    <scope>IDENTIFICATION IN A COMPLEX WITH DSL1; SEC39; SEC20; UFE1; USE1 AND SEC22</scope>
</reference>
<reference key="9">
    <citation type="journal article" date="2012" name="Proc. Natl. Acad. Sci. U.S.A.">
        <title>N-terminal acetylome analyses and functional insights of the N-terminal acetyltransferase NatB.</title>
        <authorList>
            <person name="Van Damme P."/>
            <person name="Lasa M."/>
            <person name="Polevoda B."/>
            <person name="Gazquez C."/>
            <person name="Elosegui-Artola A."/>
            <person name="Kim D.S."/>
            <person name="De Juan-Pardo E."/>
            <person name="Demeyer K."/>
            <person name="Hole K."/>
            <person name="Larrea E."/>
            <person name="Timmerman E."/>
            <person name="Prieto J."/>
            <person name="Arnesen T."/>
            <person name="Sherman F."/>
            <person name="Gevaert K."/>
            <person name="Aldabe R."/>
        </authorList>
    </citation>
    <scope>IDENTIFICATION BY MASS SPECTROMETRY [LARGE SCALE ANALYSIS]</scope>
</reference>
<accession>P33891</accession>
<accession>D6VU04</accession>